<comment type="function">
    <text evidence="1">Attaches a formyl group to the free amino group of methionyl-tRNA(fMet). The formyl group appears to play a dual role in the initiator identity of N-formylmethionyl-tRNA by promoting its recognition by IF2 and preventing the misappropriation of this tRNA by the elongation apparatus.</text>
</comment>
<comment type="catalytic activity">
    <reaction evidence="1">
        <text>L-methionyl-tRNA(fMet) + (6R)-10-formyltetrahydrofolate = N-formyl-L-methionyl-tRNA(fMet) + (6S)-5,6,7,8-tetrahydrofolate + H(+)</text>
        <dbReference type="Rhea" id="RHEA:24380"/>
        <dbReference type="Rhea" id="RHEA-COMP:9952"/>
        <dbReference type="Rhea" id="RHEA-COMP:9953"/>
        <dbReference type="ChEBI" id="CHEBI:15378"/>
        <dbReference type="ChEBI" id="CHEBI:57453"/>
        <dbReference type="ChEBI" id="CHEBI:78530"/>
        <dbReference type="ChEBI" id="CHEBI:78844"/>
        <dbReference type="ChEBI" id="CHEBI:195366"/>
        <dbReference type="EC" id="2.1.2.9"/>
    </reaction>
</comment>
<comment type="similarity">
    <text evidence="1">Belongs to the Fmt family.</text>
</comment>
<gene>
    <name evidence="1" type="primary">fmt</name>
    <name type="ordered locus">LMOf2365_1851</name>
</gene>
<accession>Q71YJ3</accession>
<reference key="1">
    <citation type="journal article" date="2004" name="Nucleic Acids Res.">
        <title>Whole genome comparisons of serotype 4b and 1/2a strains of the food-borne pathogen Listeria monocytogenes reveal new insights into the core genome components of this species.</title>
        <authorList>
            <person name="Nelson K.E."/>
            <person name="Fouts D.E."/>
            <person name="Mongodin E.F."/>
            <person name="Ravel J."/>
            <person name="DeBoy R.T."/>
            <person name="Kolonay J.F."/>
            <person name="Rasko D.A."/>
            <person name="Angiuoli S.V."/>
            <person name="Gill S.R."/>
            <person name="Paulsen I.T."/>
            <person name="Peterson J.D."/>
            <person name="White O."/>
            <person name="Nelson W.C."/>
            <person name="Nierman W.C."/>
            <person name="Beanan M.J."/>
            <person name="Brinkac L.M."/>
            <person name="Daugherty S.C."/>
            <person name="Dodson R.J."/>
            <person name="Durkin A.S."/>
            <person name="Madupu R."/>
            <person name="Haft D.H."/>
            <person name="Selengut J."/>
            <person name="Van Aken S.E."/>
            <person name="Khouri H.M."/>
            <person name="Fedorova N."/>
            <person name="Forberger H.A."/>
            <person name="Tran B."/>
            <person name="Kathariou S."/>
            <person name="Wonderling L.D."/>
            <person name="Uhlich G.A."/>
            <person name="Bayles D.O."/>
            <person name="Luchansky J.B."/>
            <person name="Fraser C.M."/>
        </authorList>
    </citation>
    <scope>NUCLEOTIDE SEQUENCE [LARGE SCALE GENOMIC DNA]</scope>
    <source>
        <strain>F2365</strain>
    </source>
</reference>
<protein>
    <recommendedName>
        <fullName evidence="1">Methionyl-tRNA formyltransferase</fullName>
        <ecNumber evidence="1">2.1.2.9</ecNumber>
    </recommendedName>
</protein>
<feature type="chain" id="PRO_0000082988" description="Methionyl-tRNA formyltransferase">
    <location>
        <begin position="1"/>
        <end position="312"/>
    </location>
</feature>
<feature type="binding site" evidence="1">
    <location>
        <begin position="109"/>
        <end position="112"/>
    </location>
    <ligand>
        <name>(6S)-5,6,7,8-tetrahydrofolate</name>
        <dbReference type="ChEBI" id="CHEBI:57453"/>
    </ligand>
</feature>
<sequence>MTKIIFMGTPEFSVPVLTQLASTYDVVAVVTQPDRPVGRKRVLTPPPVKKAALELAIPVYQPEKLRTSSELEELIALEADLLVTAAYGQILPNSLLESPKHGAINVHASLLPEYRGGAPVHYALLDGKTETGVTIMYMVEKLDAGDMISQRKIPITDEDNTGTMFDKLSKLGAELLMDTLPDFLAGKITAIPQDPEKVTFARNISREQEKIDWTKPGRTIFNQIRGLSPWPVAYTTLEEKPFKIWEATYEETKEDGEPGAILADKTTLKIVAGDGTLIVPTVIQPAGKPKMDVHSFMTGAGRNLSKTTRFGE</sequence>
<name>FMT_LISMF</name>
<keyword id="KW-0648">Protein biosynthesis</keyword>
<keyword id="KW-0808">Transferase</keyword>
<organism>
    <name type="scientific">Listeria monocytogenes serotype 4b (strain F2365)</name>
    <dbReference type="NCBI Taxonomy" id="265669"/>
    <lineage>
        <taxon>Bacteria</taxon>
        <taxon>Bacillati</taxon>
        <taxon>Bacillota</taxon>
        <taxon>Bacilli</taxon>
        <taxon>Bacillales</taxon>
        <taxon>Listeriaceae</taxon>
        <taxon>Listeria</taxon>
    </lineage>
</organism>
<evidence type="ECO:0000255" key="1">
    <source>
        <dbReference type="HAMAP-Rule" id="MF_00182"/>
    </source>
</evidence>
<proteinExistence type="inferred from homology"/>
<dbReference type="EC" id="2.1.2.9" evidence="1"/>
<dbReference type="EMBL" id="AE017262">
    <property type="protein sequence ID" value="AAT04621.1"/>
    <property type="molecule type" value="Genomic_DNA"/>
</dbReference>
<dbReference type="RefSeq" id="WP_010958956.1">
    <property type="nucleotide sequence ID" value="NC_002973.6"/>
</dbReference>
<dbReference type="SMR" id="Q71YJ3"/>
<dbReference type="KEGG" id="lmf:LMOf2365_1851"/>
<dbReference type="HOGENOM" id="CLU_033347_1_1_9"/>
<dbReference type="GO" id="GO:0005829">
    <property type="term" value="C:cytosol"/>
    <property type="evidence" value="ECO:0007669"/>
    <property type="project" value="TreeGrafter"/>
</dbReference>
<dbReference type="GO" id="GO:0004479">
    <property type="term" value="F:methionyl-tRNA formyltransferase activity"/>
    <property type="evidence" value="ECO:0007669"/>
    <property type="project" value="UniProtKB-UniRule"/>
</dbReference>
<dbReference type="CDD" id="cd08646">
    <property type="entry name" value="FMT_core_Met-tRNA-FMT_N"/>
    <property type="match status" value="1"/>
</dbReference>
<dbReference type="CDD" id="cd08704">
    <property type="entry name" value="Met_tRNA_FMT_C"/>
    <property type="match status" value="1"/>
</dbReference>
<dbReference type="FunFam" id="3.40.50.12230:FF:000001">
    <property type="entry name" value="Methionyl-tRNA formyltransferase"/>
    <property type="match status" value="1"/>
</dbReference>
<dbReference type="FunFam" id="3.40.50.170:FF:000004">
    <property type="entry name" value="Methionyl-tRNA formyltransferase"/>
    <property type="match status" value="1"/>
</dbReference>
<dbReference type="Gene3D" id="3.40.50.12230">
    <property type="match status" value="1"/>
</dbReference>
<dbReference type="HAMAP" id="MF_00182">
    <property type="entry name" value="Formyl_trans"/>
    <property type="match status" value="1"/>
</dbReference>
<dbReference type="InterPro" id="IPR005794">
    <property type="entry name" value="Fmt"/>
</dbReference>
<dbReference type="InterPro" id="IPR005793">
    <property type="entry name" value="Formyl_trans_C"/>
</dbReference>
<dbReference type="InterPro" id="IPR002376">
    <property type="entry name" value="Formyl_transf_N"/>
</dbReference>
<dbReference type="InterPro" id="IPR036477">
    <property type="entry name" value="Formyl_transf_N_sf"/>
</dbReference>
<dbReference type="InterPro" id="IPR011034">
    <property type="entry name" value="Formyl_transferase-like_C_sf"/>
</dbReference>
<dbReference type="InterPro" id="IPR001555">
    <property type="entry name" value="GART_AS"/>
</dbReference>
<dbReference type="InterPro" id="IPR044135">
    <property type="entry name" value="Met-tRNA-FMT_C"/>
</dbReference>
<dbReference type="InterPro" id="IPR041711">
    <property type="entry name" value="Met-tRNA-FMT_N"/>
</dbReference>
<dbReference type="NCBIfam" id="TIGR00460">
    <property type="entry name" value="fmt"/>
    <property type="match status" value="1"/>
</dbReference>
<dbReference type="PANTHER" id="PTHR11138">
    <property type="entry name" value="METHIONYL-TRNA FORMYLTRANSFERASE"/>
    <property type="match status" value="1"/>
</dbReference>
<dbReference type="PANTHER" id="PTHR11138:SF5">
    <property type="entry name" value="METHIONYL-TRNA FORMYLTRANSFERASE, MITOCHONDRIAL"/>
    <property type="match status" value="1"/>
</dbReference>
<dbReference type="Pfam" id="PF02911">
    <property type="entry name" value="Formyl_trans_C"/>
    <property type="match status" value="1"/>
</dbReference>
<dbReference type="Pfam" id="PF00551">
    <property type="entry name" value="Formyl_trans_N"/>
    <property type="match status" value="1"/>
</dbReference>
<dbReference type="SUPFAM" id="SSF50486">
    <property type="entry name" value="FMT C-terminal domain-like"/>
    <property type="match status" value="1"/>
</dbReference>
<dbReference type="SUPFAM" id="SSF53328">
    <property type="entry name" value="Formyltransferase"/>
    <property type="match status" value="1"/>
</dbReference>
<dbReference type="PROSITE" id="PS00373">
    <property type="entry name" value="GART"/>
    <property type="match status" value="1"/>
</dbReference>